<dbReference type="EC" id="3.4.22.-" evidence="2"/>
<dbReference type="EMBL" id="AY570549">
    <property type="protein sequence ID" value="AAS78581.1"/>
    <property type="molecule type" value="mRNA"/>
</dbReference>
<dbReference type="RefSeq" id="NP_001001171.1">
    <property type="nucleotide sequence ID" value="NM_001001171.1"/>
</dbReference>
<dbReference type="SMR" id="Q6PZ05"/>
<dbReference type="FunCoup" id="Q6PZ05">
    <property type="interactions" value="1183"/>
</dbReference>
<dbReference type="STRING" id="9913.ENSBTAP00000070578"/>
<dbReference type="MEROPS" id="C54.002"/>
<dbReference type="PaxDb" id="9913-ENSBTAP00000018239"/>
<dbReference type="GeneID" id="408003"/>
<dbReference type="KEGG" id="bta:408003"/>
<dbReference type="CTD" id="115201"/>
<dbReference type="eggNOG" id="KOG2674">
    <property type="taxonomic scope" value="Eukaryota"/>
</dbReference>
<dbReference type="InParanoid" id="Q6PZ05"/>
<dbReference type="OrthoDB" id="2960936at2759"/>
<dbReference type="Proteomes" id="UP000009136">
    <property type="component" value="Unplaced"/>
</dbReference>
<dbReference type="GO" id="GO:0005737">
    <property type="term" value="C:cytoplasm"/>
    <property type="evidence" value="ECO:0000318"/>
    <property type="project" value="GO_Central"/>
</dbReference>
<dbReference type="GO" id="GO:0004197">
    <property type="term" value="F:cysteine-type endopeptidase activity"/>
    <property type="evidence" value="ECO:0000318"/>
    <property type="project" value="GO_Central"/>
</dbReference>
<dbReference type="GO" id="GO:0008234">
    <property type="term" value="F:cysteine-type peptidase activity"/>
    <property type="evidence" value="ECO:0000250"/>
    <property type="project" value="UniProtKB"/>
</dbReference>
<dbReference type="GO" id="GO:0019786">
    <property type="term" value="F:protein-phosphatidylethanolamide deconjugating activity"/>
    <property type="evidence" value="ECO:0000250"/>
    <property type="project" value="UniProtKB"/>
</dbReference>
<dbReference type="GO" id="GO:0035973">
    <property type="term" value="P:aggrephagy"/>
    <property type="evidence" value="ECO:0000318"/>
    <property type="project" value="GO_Central"/>
</dbReference>
<dbReference type="GO" id="GO:0000045">
    <property type="term" value="P:autophagosome assembly"/>
    <property type="evidence" value="ECO:0000318"/>
    <property type="project" value="GO_Central"/>
</dbReference>
<dbReference type="GO" id="GO:0006914">
    <property type="term" value="P:autophagy"/>
    <property type="evidence" value="ECO:0000250"/>
    <property type="project" value="UniProtKB"/>
</dbReference>
<dbReference type="GO" id="GO:0006629">
    <property type="term" value="P:lipid metabolic process"/>
    <property type="evidence" value="ECO:0007669"/>
    <property type="project" value="UniProtKB-KW"/>
</dbReference>
<dbReference type="GO" id="GO:0000423">
    <property type="term" value="P:mitophagy"/>
    <property type="evidence" value="ECO:0000318"/>
    <property type="project" value="GO_Central"/>
</dbReference>
<dbReference type="GO" id="GO:0034727">
    <property type="term" value="P:piecemeal microautophagy of the nucleus"/>
    <property type="evidence" value="ECO:0000318"/>
    <property type="project" value="GO_Central"/>
</dbReference>
<dbReference type="GO" id="GO:0051697">
    <property type="term" value="P:protein delipidation"/>
    <property type="evidence" value="ECO:0000250"/>
    <property type="project" value="UniProtKB"/>
</dbReference>
<dbReference type="GO" id="GO:0016485">
    <property type="term" value="P:protein processing"/>
    <property type="evidence" value="ECO:0000318"/>
    <property type="project" value="GO_Central"/>
</dbReference>
<dbReference type="GO" id="GO:0015031">
    <property type="term" value="P:protein transport"/>
    <property type="evidence" value="ECO:0007669"/>
    <property type="project" value="UniProtKB-KW"/>
</dbReference>
<dbReference type="InterPro" id="IPR046793">
    <property type="entry name" value="ATG4_LIR"/>
</dbReference>
<dbReference type="InterPro" id="IPR038765">
    <property type="entry name" value="Papain-like_cys_pep_sf"/>
</dbReference>
<dbReference type="InterPro" id="IPR005078">
    <property type="entry name" value="Peptidase_C54"/>
</dbReference>
<dbReference type="InterPro" id="IPR046792">
    <property type="entry name" value="Peptidase_C54_cat"/>
</dbReference>
<dbReference type="PANTHER" id="PTHR22624">
    <property type="entry name" value="CYSTEINE PROTEASE ATG4"/>
    <property type="match status" value="1"/>
</dbReference>
<dbReference type="PANTHER" id="PTHR22624:SF35">
    <property type="entry name" value="CYSTEINE PROTEASE ATG4A"/>
    <property type="match status" value="1"/>
</dbReference>
<dbReference type="Pfam" id="PF20166">
    <property type="entry name" value="ATG4_LIR"/>
    <property type="match status" value="1"/>
</dbReference>
<dbReference type="Pfam" id="PF03416">
    <property type="entry name" value="Peptidase_C54"/>
    <property type="match status" value="1"/>
</dbReference>
<dbReference type="SUPFAM" id="SSF54001">
    <property type="entry name" value="Cysteine proteinases"/>
    <property type="match status" value="1"/>
</dbReference>
<reference key="1">
    <citation type="journal article" date="2004" name="J. Virol.">
        <title>Processing of a pestivirus protein by a cellular protease specific for light chain 3 of microtubule-associated proteins.</title>
        <authorList>
            <person name="Fricke J."/>
            <person name="Voss C."/>
            <person name="Thumm M."/>
            <person name="Meyers G."/>
        </authorList>
    </citation>
    <scope>NUCLEOTIDE SEQUENCE [MRNA]</scope>
    <scope>FUNCTION (MICROBIAL INFECTION)</scope>
</reference>
<organism>
    <name type="scientific">Bos taurus</name>
    <name type="common">Bovine</name>
    <dbReference type="NCBI Taxonomy" id="9913"/>
    <lineage>
        <taxon>Eukaryota</taxon>
        <taxon>Metazoa</taxon>
        <taxon>Chordata</taxon>
        <taxon>Craniata</taxon>
        <taxon>Vertebrata</taxon>
        <taxon>Euteleostomi</taxon>
        <taxon>Mammalia</taxon>
        <taxon>Eutheria</taxon>
        <taxon>Laurasiatheria</taxon>
        <taxon>Artiodactyla</taxon>
        <taxon>Ruminantia</taxon>
        <taxon>Pecora</taxon>
        <taxon>Bovidae</taxon>
        <taxon>Bovinae</taxon>
        <taxon>Bos</taxon>
    </lineage>
</organism>
<name>ATG4A_BOVIN</name>
<keyword id="KW-0072">Autophagy</keyword>
<keyword id="KW-0963">Cytoplasm</keyword>
<keyword id="KW-0378">Hydrolase</keyword>
<keyword id="KW-0443">Lipid metabolism</keyword>
<keyword id="KW-0645">Protease</keyword>
<keyword id="KW-0653">Protein transport</keyword>
<keyword id="KW-1185">Reference proteome</keyword>
<keyword id="KW-0788">Thiol protease</keyword>
<keyword id="KW-0813">Transport</keyword>
<keyword id="KW-0833">Ubl conjugation pathway</keyword>
<comment type="function">
    <text evidence="2">Cysteine protease that plays a key role in autophagy by mediating both proteolytic activation and delipidation of ATG8 family proteins. The protease activity is required for proteolytic activation of ATG8 family proteins: cleaves the C-terminal amino acid of ATG8 proteins to reveal a C-terminal glycine. Exposure of the glycine at the C-terminus is essential for ATG8 proteins conjugation to phosphatidylethanolamine (PE) and insertion to membranes, which is necessary for autophagy. Preferred substrate is GABARAPL2 followed by MAP1LC3A and GABARAP. Protease activity is also required to counteract formation of high-molecular weight conjugates of ATG8 proteins (ATG8ylation): acts as a deubiquitinating-like enzyme that removes ATG8 conjugated to other proteins, such as ATG3. In addition to the protease activity, also mediates delipidation of ATG8 family proteins. Catalyzes delipidation of PE-conjugated forms of ATG8 proteins during macroautophagy. Compared to ATG4B, the major protein for proteolytic activation of ATG8 proteins, shows weaker ability to cleave the C-terminal amino acid of ATG8 proteins, while it displays stronger delipidation activity. Involved in phagophore growth during mitophagy independently of its protease activity and of ATG8 proteins: acts by regulating ATG9A trafficking to mitochondria and promoting phagophore-endoplasmic reticulum contacts during the lipid transfer phase of mitophagy.</text>
</comment>
<comment type="function">
    <text evidence="4">(Microbial infection) Mediates cleavage of an ATG8 protein homolog coded in the genome of cytopathogenic bovine viral diarrhea virus (BVDV).</text>
</comment>
<comment type="catalytic activity">
    <reaction evidence="2">
        <text>[protein]-C-terminal L-amino acid-glycyl-phosphatidylethanolamide + H2O = [protein]-C-terminal L-amino acid-glycine + a 1,2-diacyl-sn-glycero-3-phosphoethanolamine</text>
        <dbReference type="Rhea" id="RHEA:67548"/>
        <dbReference type="Rhea" id="RHEA-COMP:17323"/>
        <dbReference type="Rhea" id="RHEA-COMP:17324"/>
        <dbReference type="ChEBI" id="CHEBI:15377"/>
        <dbReference type="ChEBI" id="CHEBI:64612"/>
        <dbReference type="ChEBI" id="CHEBI:172940"/>
        <dbReference type="ChEBI" id="CHEBI:172941"/>
    </reaction>
    <physiologicalReaction direction="left-to-right" evidence="2">
        <dbReference type="Rhea" id="RHEA:67549"/>
    </physiologicalReaction>
</comment>
<comment type="activity regulation">
    <text evidence="2">Inhibited by N-ethylmaleimide. Redox-regulated during autophagy since reducing conditions activate ATG4A whereas an oxidizing environment such as the presence of H(2)O(2) inhibits its activity.</text>
</comment>
<comment type="subunit">
    <text evidence="2">Interacts with ATG9A; the interaction is direct.</text>
</comment>
<comment type="subcellular location">
    <subcellularLocation>
        <location evidence="1">Cytoplasm</location>
    </subcellularLocation>
</comment>
<comment type="domain">
    <text evidence="2">The LIR motif (LC3-interacting region) is required for the interaction with the ATG8 family proteins. Required for proteolytic activation and delipidation of ATG8 proteins.</text>
</comment>
<comment type="similarity">
    <text evidence="6">Belongs to the peptidase C54 family.</text>
</comment>
<sequence length="398" mass="45354">MESVLSKYENQITIFADYLEEFPDTDELVWILGKQHLLKTEKSKLLSDISARLWFTYRRKFSPIGGTGPSSDAGWGCMLRCGQMMLAQALICRHLGRDWNWEKQKEQPKEYQRILQCFLDRKDCCYSIHQMAQMGVGEGKSIGEWFGPNTVAQVLKKLALFDEWNSLAVYVSMDNTVVIEDIKKMCRTLSLSADTPAERPLESLTASNQSKGPSACCTAWKPLLLIVPLRLGINQINPVYVDAFKECFKMPQSLGALGGKPNNAYYFIGFLGDELIFLDPHTTQTFVDTEENGTADDQTFHCLQPPQRMNILNLDPSVALGFFCKEEKDFDSWCSLVQKEILKENLRMFELVQKHPSHWPPFVPPAKPEVTTTGAEFIDSTEQLEEFDLEEDFEILSI</sequence>
<accession>Q6PZ05</accession>
<feature type="chain" id="PRO_0000215837" description="Cysteine protease ATG4A">
    <location>
        <begin position="1"/>
        <end position="398"/>
    </location>
</feature>
<feature type="short sequence motif" description="LIR" evidence="2">
    <location>
        <begin position="393"/>
        <end position="396"/>
    </location>
</feature>
<feature type="active site" description="Nucleophile" evidence="3">
    <location>
        <position position="77"/>
    </location>
</feature>
<feature type="active site" evidence="3">
    <location>
        <position position="279"/>
    </location>
</feature>
<feature type="active site" evidence="3">
    <location>
        <position position="281"/>
    </location>
</feature>
<proteinExistence type="evidence at transcript level"/>
<gene>
    <name evidence="2" type="primary">ATG4A</name>
    <name evidence="2" type="synonym">APG4A</name>
    <name evidence="5" type="synonym">AUT2A</name>
</gene>
<evidence type="ECO:0000250" key="1">
    <source>
        <dbReference type="UniProtKB" id="Q8BGE6"/>
    </source>
</evidence>
<evidence type="ECO:0000250" key="2">
    <source>
        <dbReference type="UniProtKB" id="Q8WYN0"/>
    </source>
</evidence>
<evidence type="ECO:0000250" key="3">
    <source>
        <dbReference type="UniProtKB" id="Q9Y4P1"/>
    </source>
</evidence>
<evidence type="ECO:0000269" key="4">
    <source>
    </source>
</evidence>
<evidence type="ECO:0000303" key="5">
    <source>
    </source>
</evidence>
<evidence type="ECO:0000305" key="6"/>
<protein>
    <recommendedName>
        <fullName evidence="6">Cysteine protease ATG4A</fullName>
        <ecNumber evidence="2">3.4.22.-</ecNumber>
    </recommendedName>
    <alternativeName>
        <fullName evidence="2">Autophagy-related cysteine endopeptidase 2A</fullName>
        <shortName evidence="2">Autophagin-2A</shortName>
        <shortName evidence="5">bAut2A</shortName>
    </alternativeName>
    <alternativeName>
        <fullName evidence="2">Autophagy-related protein 4 homolog A</fullName>
    </alternativeName>
</protein>